<dbReference type="EC" id="2.1.2.13" evidence="1"/>
<dbReference type="EC" id="1.1.1.305" evidence="1"/>
<dbReference type="EMBL" id="FM209186">
    <property type="protein sequence ID" value="CAW26207.1"/>
    <property type="molecule type" value="Genomic_DNA"/>
</dbReference>
<dbReference type="RefSeq" id="WP_003119539.1">
    <property type="nucleotide sequence ID" value="NC_011770.1"/>
</dbReference>
<dbReference type="SMR" id="B7VBN2"/>
<dbReference type="KEGG" id="pag:PLES_14791"/>
<dbReference type="HOGENOM" id="CLU_007383_23_0_6"/>
<dbReference type="UniPathway" id="UPA00030"/>
<dbReference type="UniPathway" id="UPA00032">
    <property type="reaction ID" value="UER00492"/>
</dbReference>
<dbReference type="UniPathway" id="UPA00032">
    <property type="reaction ID" value="UER00494"/>
</dbReference>
<dbReference type="GO" id="GO:0016020">
    <property type="term" value="C:membrane"/>
    <property type="evidence" value="ECO:0007669"/>
    <property type="project" value="GOC"/>
</dbReference>
<dbReference type="GO" id="GO:0016831">
    <property type="term" value="F:carboxy-lyase activity"/>
    <property type="evidence" value="ECO:0007669"/>
    <property type="project" value="InterPro"/>
</dbReference>
<dbReference type="GO" id="GO:0099619">
    <property type="term" value="F:UDP-4-amino-4-deoxy-L-arabinose formyltransferase activity"/>
    <property type="evidence" value="ECO:0007669"/>
    <property type="project" value="UniProtKB-EC"/>
</dbReference>
<dbReference type="GO" id="GO:0099618">
    <property type="term" value="F:UDP-glucuronate dehydrogenase activity"/>
    <property type="evidence" value="ECO:0007669"/>
    <property type="project" value="UniProtKB-EC"/>
</dbReference>
<dbReference type="GO" id="GO:0009245">
    <property type="term" value="P:lipid A biosynthetic process"/>
    <property type="evidence" value="ECO:0007669"/>
    <property type="project" value="UniProtKB-KW"/>
</dbReference>
<dbReference type="GO" id="GO:0009103">
    <property type="term" value="P:lipopolysaccharide biosynthetic process"/>
    <property type="evidence" value="ECO:0007669"/>
    <property type="project" value="UniProtKB-UniRule"/>
</dbReference>
<dbReference type="GO" id="GO:0046677">
    <property type="term" value="P:response to antibiotic"/>
    <property type="evidence" value="ECO:0007669"/>
    <property type="project" value="UniProtKB-KW"/>
</dbReference>
<dbReference type="CDD" id="cd08702">
    <property type="entry name" value="Arna_FMT_C"/>
    <property type="match status" value="1"/>
</dbReference>
<dbReference type="CDD" id="cd05257">
    <property type="entry name" value="Arna_like_SDR_e"/>
    <property type="match status" value="1"/>
</dbReference>
<dbReference type="FunFam" id="3.40.50.720:FF:000197">
    <property type="entry name" value="Bifunctional polymyxin resistance protein ArnA"/>
    <property type="match status" value="1"/>
</dbReference>
<dbReference type="Gene3D" id="3.40.50.12230">
    <property type="match status" value="1"/>
</dbReference>
<dbReference type="Gene3D" id="3.40.50.720">
    <property type="entry name" value="NAD(P)-binding Rossmann-like Domain"/>
    <property type="match status" value="1"/>
</dbReference>
<dbReference type="HAMAP" id="MF_01166">
    <property type="entry name" value="ArnA"/>
    <property type="match status" value="1"/>
</dbReference>
<dbReference type="InterPro" id="IPR045869">
    <property type="entry name" value="Arna-like_SDR_e"/>
</dbReference>
<dbReference type="InterPro" id="IPR021168">
    <property type="entry name" value="Bifun_polymyxin_resist_ArnA"/>
</dbReference>
<dbReference type="InterPro" id="IPR001509">
    <property type="entry name" value="Epimerase_deHydtase"/>
</dbReference>
<dbReference type="InterPro" id="IPR005793">
    <property type="entry name" value="Formyl_trans_C"/>
</dbReference>
<dbReference type="InterPro" id="IPR002376">
    <property type="entry name" value="Formyl_transf_N"/>
</dbReference>
<dbReference type="InterPro" id="IPR036477">
    <property type="entry name" value="Formyl_transf_N_sf"/>
</dbReference>
<dbReference type="InterPro" id="IPR011034">
    <property type="entry name" value="Formyl_transferase-like_C_sf"/>
</dbReference>
<dbReference type="InterPro" id="IPR050177">
    <property type="entry name" value="Lipid_A_modif_metabolic_enz"/>
</dbReference>
<dbReference type="InterPro" id="IPR036291">
    <property type="entry name" value="NAD(P)-bd_dom_sf"/>
</dbReference>
<dbReference type="NCBIfam" id="NF005414">
    <property type="entry name" value="PRK06988.1"/>
    <property type="match status" value="1"/>
</dbReference>
<dbReference type="NCBIfam" id="NF005998">
    <property type="entry name" value="PRK08125.1"/>
    <property type="match status" value="1"/>
</dbReference>
<dbReference type="NCBIfam" id="NF008872">
    <property type="entry name" value="PRK11908.1"/>
    <property type="match status" value="1"/>
</dbReference>
<dbReference type="PANTHER" id="PTHR43245">
    <property type="entry name" value="BIFUNCTIONAL POLYMYXIN RESISTANCE PROTEIN ARNA"/>
    <property type="match status" value="1"/>
</dbReference>
<dbReference type="PANTHER" id="PTHR43245:SF13">
    <property type="entry name" value="UDP-D-APIOSE_UDP-D-XYLOSE SYNTHASE 2"/>
    <property type="match status" value="1"/>
</dbReference>
<dbReference type="Pfam" id="PF01370">
    <property type="entry name" value="Epimerase"/>
    <property type="match status" value="1"/>
</dbReference>
<dbReference type="Pfam" id="PF02911">
    <property type="entry name" value="Formyl_trans_C"/>
    <property type="match status" value="1"/>
</dbReference>
<dbReference type="Pfam" id="PF00551">
    <property type="entry name" value="Formyl_trans_N"/>
    <property type="match status" value="1"/>
</dbReference>
<dbReference type="PIRSF" id="PIRSF036506">
    <property type="entry name" value="Bifun_polymyxin_resist_ArnA"/>
    <property type="match status" value="1"/>
</dbReference>
<dbReference type="SUPFAM" id="SSF50486">
    <property type="entry name" value="FMT C-terminal domain-like"/>
    <property type="match status" value="1"/>
</dbReference>
<dbReference type="SUPFAM" id="SSF53328">
    <property type="entry name" value="Formyltransferase"/>
    <property type="match status" value="1"/>
</dbReference>
<dbReference type="SUPFAM" id="SSF51735">
    <property type="entry name" value="NAD(P)-binding Rossmann-fold domains"/>
    <property type="match status" value="1"/>
</dbReference>
<comment type="function">
    <text evidence="1">Bifunctional enzyme that catalyzes the oxidative decarboxylation of UDP-glucuronic acid (UDP-GlcUA) to UDP-4-keto-arabinose (UDP-Ara4O) and the addition of a formyl group to UDP-4-amino-4-deoxy-L-arabinose (UDP-L-Ara4N) to form UDP-L-4-formamido-arabinose (UDP-L-Ara4FN). The modified arabinose is attached to lipid A and is required for resistance to polymyxin and cationic antimicrobial peptides.</text>
</comment>
<comment type="catalytic activity">
    <reaction evidence="1">
        <text>UDP-alpha-D-glucuronate + NAD(+) = UDP-beta-L-threo-pentopyranos-4-ulose + CO2 + NADH</text>
        <dbReference type="Rhea" id="RHEA:24702"/>
        <dbReference type="ChEBI" id="CHEBI:16526"/>
        <dbReference type="ChEBI" id="CHEBI:57540"/>
        <dbReference type="ChEBI" id="CHEBI:57945"/>
        <dbReference type="ChEBI" id="CHEBI:58052"/>
        <dbReference type="ChEBI" id="CHEBI:58710"/>
        <dbReference type="EC" id="1.1.1.305"/>
    </reaction>
</comment>
<comment type="catalytic activity">
    <reaction evidence="1">
        <text>UDP-4-amino-4-deoxy-beta-L-arabinose + (6R)-10-formyltetrahydrofolate = UDP-4-deoxy-4-formamido-beta-L-arabinose + (6S)-5,6,7,8-tetrahydrofolate + H(+)</text>
        <dbReference type="Rhea" id="RHEA:24706"/>
        <dbReference type="ChEBI" id="CHEBI:15378"/>
        <dbReference type="ChEBI" id="CHEBI:57453"/>
        <dbReference type="ChEBI" id="CHEBI:58708"/>
        <dbReference type="ChEBI" id="CHEBI:58709"/>
        <dbReference type="ChEBI" id="CHEBI:195366"/>
        <dbReference type="EC" id="2.1.2.13"/>
    </reaction>
</comment>
<comment type="pathway">
    <text evidence="1">Nucleotide-sugar biosynthesis; UDP-4-deoxy-4-formamido-beta-L-arabinose biosynthesis; UDP-4-deoxy-4-formamido-beta-L-arabinose from UDP-alpha-D-glucuronate: step 1/3.</text>
</comment>
<comment type="pathway">
    <text evidence="1">Nucleotide-sugar biosynthesis; UDP-4-deoxy-4-formamido-beta-L-arabinose biosynthesis; UDP-4-deoxy-4-formamido-beta-L-arabinose from UDP-alpha-D-glucuronate: step 3/3.</text>
</comment>
<comment type="pathway">
    <text evidence="1">Bacterial outer membrane biogenesis; lipopolysaccharide biosynthesis.</text>
</comment>
<comment type="subunit">
    <text evidence="1">Homohexamer, formed by a dimer of trimers.</text>
</comment>
<comment type="similarity">
    <text evidence="1">In the N-terminal section; belongs to the Fmt family. UDP-L-Ara4N formyltransferase subfamily.</text>
</comment>
<comment type="similarity">
    <text evidence="1">In the C-terminal section; belongs to the NAD(P)-dependent epimerase/dehydratase family. UDP-glucuronic acid decarboxylase subfamily.</text>
</comment>
<accession>B7VBN2</accession>
<proteinExistence type="inferred from homology"/>
<sequence>MTSKAVVFAYHDIGCTGIEALLNAGYEIAAVFTHADDPRENTFYASVARLCAERGIPLHAPEDVNHPLWLERIRQLRPDFLFSFYYRRLLGAELLACAARGAYNLHGSLLPRYRGRAPANWVLVNGETQTGVTLHRMIERADAGPILAQQAVAIDPEDTALSLHGKLRKAAGALLRDSLPLLALGVLPEVEQDESQASHFGRRTPADGLLDWHRPARQLYDLVRAVTQPYPGAFCQVGEQKLIVWSAEVVAGNHGREPGSVLSCDPLRIACGEDSLVLRFGQRGERGLYLAGTQLATELGLVEGARLRGAASGPQRRTRVLILGVNGFIGNHLSERLLRDGRYEVHGMDIGSDAIERLKADPHFHFVEGDIGIHSEWLEYHVKKCDVILPLVAIATPIEYTRNPLRVFELDFEENLRIVRYCVKYGKRVVFPSTSEVYGMCQDPDFDEDRSNLVVGPINKQRWIYSVSKQLLDRVIWAYGQQGLRFTLFRPFNWMGPRLDRLDSARIGSSRAITQLILHLVEGTPIRLVDGGAQKRCFTDVDDGIEALARIIDNRDGRCDGQIVNIGNPDNEASIRQLGEELLRQFEAHPLRAQFPPFAGFREVESRSFYGDGYQDVAHRKPSIDNARRLLDWQPTIELRETIGKTLDFFLHEALREREAQA</sequence>
<organism>
    <name type="scientific">Pseudomonas aeruginosa (strain LESB58)</name>
    <dbReference type="NCBI Taxonomy" id="557722"/>
    <lineage>
        <taxon>Bacteria</taxon>
        <taxon>Pseudomonadati</taxon>
        <taxon>Pseudomonadota</taxon>
        <taxon>Gammaproteobacteria</taxon>
        <taxon>Pseudomonadales</taxon>
        <taxon>Pseudomonadaceae</taxon>
        <taxon>Pseudomonas</taxon>
    </lineage>
</organism>
<reference key="1">
    <citation type="journal article" date="2009" name="Genome Res.">
        <title>Newly introduced genomic prophage islands are critical determinants of in vivo competitiveness in the Liverpool epidemic strain of Pseudomonas aeruginosa.</title>
        <authorList>
            <person name="Winstanley C."/>
            <person name="Langille M.G.I."/>
            <person name="Fothergill J.L."/>
            <person name="Kukavica-Ibrulj I."/>
            <person name="Paradis-Bleau C."/>
            <person name="Sanschagrin F."/>
            <person name="Thomson N.R."/>
            <person name="Winsor G.L."/>
            <person name="Quail M.A."/>
            <person name="Lennard N."/>
            <person name="Bignell A."/>
            <person name="Clarke L."/>
            <person name="Seeger K."/>
            <person name="Saunders D."/>
            <person name="Harris D."/>
            <person name="Parkhill J."/>
            <person name="Hancock R.E.W."/>
            <person name="Brinkman F.S.L."/>
            <person name="Levesque R.C."/>
        </authorList>
    </citation>
    <scope>NUCLEOTIDE SEQUENCE [LARGE SCALE GENOMIC DNA]</scope>
    <source>
        <strain>LESB58</strain>
    </source>
</reference>
<gene>
    <name evidence="1" type="primary">arnA</name>
    <name type="ordered locus">PLES_14791</name>
</gene>
<protein>
    <recommendedName>
        <fullName evidence="1">Bifunctional polymyxin resistance protein ArnA</fullName>
    </recommendedName>
    <domain>
        <recommendedName>
            <fullName evidence="1">UDP-4-amino-4-deoxy-L-arabinose formyltransferase</fullName>
            <ecNumber evidence="1">2.1.2.13</ecNumber>
        </recommendedName>
        <alternativeName>
            <fullName evidence="1">ArnAFT</fullName>
        </alternativeName>
        <alternativeName>
            <fullName evidence="1">UDP-L-Ara4N formyltransferase</fullName>
        </alternativeName>
    </domain>
    <domain>
        <recommendedName>
            <fullName evidence="1">UDP-glucuronic acid oxidase, UDP-4-keto-hexauronic acid decarboxylating</fullName>
            <ecNumber evidence="1">1.1.1.305</ecNumber>
        </recommendedName>
        <alternativeName>
            <fullName evidence="1">ArnADH</fullName>
        </alternativeName>
        <alternativeName>
            <fullName evidence="1">UDP-GlcUA decarboxylase</fullName>
        </alternativeName>
        <alternativeName>
            <fullName evidence="1">UDP-glucuronic acid dehydrogenase</fullName>
        </alternativeName>
    </domain>
</protein>
<feature type="chain" id="PRO_1000137944" description="Bifunctional polymyxin resistance protein ArnA">
    <location>
        <begin position="1"/>
        <end position="662"/>
    </location>
</feature>
<feature type="region of interest" description="Formyltransferase ArnAFT">
    <location>
        <begin position="1"/>
        <end position="307"/>
    </location>
</feature>
<feature type="region of interest" description="Dehydrogenase ArnADH">
    <location>
        <begin position="316"/>
        <end position="662"/>
    </location>
</feature>
<feature type="active site" description="Proton donor; for formyltransferase activity" evidence="1">
    <location>
        <position position="106"/>
    </location>
</feature>
<feature type="active site" description="Proton acceptor; for decarboxylase activity" evidence="1">
    <location>
        <position position="436"/>
    </location>
</feature>
<feature type="active site" description="Proton donor; for decarboxylase activity" evidence="1">
    <location>
        <position position="620"/>
    </location>
</feature>
<feature type="binding site" evidence="1">
    <location>
        <position position="116"/>
    </location>
    <ligand>
        <name>(6R)-10-formyltetrahydrofolate</name>
        <dbReference type="ChEBI" id="CHEBI:195366"/>
    </ligand>
</feature>
<feature type="binding site" evidence="1">
    <location>
        <begin position="138"/>
        <end position="142"/>
    </location>
    <ligand>
        <name>(6R)-10-formyltetrahydrofolate</name>
        <dbReference type="ChEBI" id="CHEBI:195366"/>
    </ligand>
</feature>
<feature type="binding site" evidence="1">
    <location>
        <position position="349"/>
    </location>
    <ligand>
        <name>NAD(+)</name>
        <dbReference type="ChEBI" id="CHEBI:57540"/>
    </ligand>
</feature>
<feature type="binding site" evidence="1">
    <location>
        <begin position="370"/>
        <end position="371"/>
    </location>
    <ligand>
        <name>NAD(+)</name>
        <dbReference type="ChEBI" id="CHEBI:57540"/>
    </ligand>
</feature>
<feature type="binding site" evidence="1">
    <location>
        <position position="395"/>
    </location>
    <ligand>
        <name>UDP-alpha-D-glucuronate</name>
        <dbReference type="ChEBI" id="CHEBI:58052"/>
    </ligand>
</feature>
<feature type="binding site" evidence="1">
    <location>
        <position position="400"/>
    </location>
    <ligand>
        <name>UDP-alpha-D-glucuronate</name>
        <dbReference type="ChEBI" id="CHEBI:58052"/>
    </ligand>
</feature>
<feature type="binding site" evidence="1">
    <location>
        <begin position="434"/>
        <end position="435"/>
    </location>
    <ligand>
        <name>UDP-alpha-D-glucuronate</name>
        <dbReference type="ChEBI" id="CHEBI:58052"/>
    </ligand>
</feature>
<feature type="binding site" evidence="1">
    <location>
        <position position="462"/>
    </location>
    <ligand>
        <name>UDP-alpha-D-glucuronate</name>
        <dbReference type="ChEBI" id="CHEBI:58052"/>
    </ligand>
</feature>
<feature type="binding site" evidence="1">
    <location>
        <position position="493"/>
    </location>
    <ligand>
        <name>UDP-alpha-D-glucuronate</name>
        <dbReference type="ChEBI" id="CHEBI:58052"/>
    </ligand>
</feature>
<feature type="binding site" evidence="1">
    <location>
        <begin position="527"/>
        <end position="536"/>
    </location>
    <ligand>
        <name>UDP-alpha-D-glucuronate</name>
        <dbReference type="ChEBI" id="CHEBI:58052"/>
    </ligand>
</feature>
<feature type="binding site" evidence="1">
    <location>
        <position position="614"/>
    </location>
    <ligand>
        <name>UDP-alpha-D-glucuronate</name>
        <dbReference type="ChEBI" id="CHEBI:58052"/>
    </ligand>
</feature>
<feature type="site" description="Transition state stabilizer" evidence="1">
    <location>
        <position position="104"/>
    </location>
</feature>
<feature type="site" description="Raises pKa of active site His" evidence="1">
    <location>
        <position position="142"/>
    </location>
</feature>
<evidence type="ECO:0000255" key="1">
    <source>
        <dbReference type="HAMAP-Rule" id="MF_01166"/>
    </source>
</evidence>
<name>ARNA_PSEA8</name>
<keyword id="KW-0046">Antibiotic resistance</keyword>
<keyword id="KW-0441">Lipid A biosynthesis</keyword>
<keyword id="KW-0444">Lipid biosynthesis</keyword>
<keyword id="KW-0443">Lipid metabolism</keyword>
<keyword id="KW-0448">Lipopolysaccharide biosynthesis</keyword>
<keyword id="KW-0511">Multifunctional enzyme</keyword>
<keyword id="KW-0520">NAD</keyword>
<keyword id="KW-0560">Oxidoreductase</keyword>
<keyword id="KW-0808">Transferase</keyword>